<name>UBA5_CULQU</name>
<evidence type="ECO:0000250" key="1"/>
<evidence type="ECO:0000305" key="2"/>
<proteinExistence type="inferred from homology"/>
<keyword id="KW-0067">ATP-binding</keyword>
<keyword id="KW-0479">Metal-binding</keyword>
<keyword id="KW-0547">Nucleotide-binding</keyword>
<keyword id="KW-1185">Reference proteome</keyword>
<keyword id="KW-0833">Ubl conjugation pathway</keyword>
<keyword id="KW-0862">Zinc</keyword>
<accession>B0WQV1</accession>
<feature type="chain" id="PRO_0000391940" description="Ubiquitin-like modifier-activating enzyme 5">
    <location>
        <begin position="1"/>
        <end position="397"/>
    </location>
</feature>
<feature type="active site" description="Glycyl thioester intermediate" evidence="1">
    <location>
        <position position="244"/>
    </location>
</feature>
<feature type="binding site" evidence="1">
    <location>
        <position position="77"/>
    </location>
    <ligand>
        <name>ATP</name>
        <dbReference type="ChEBI" id="CHEBI:30616"/>
    </ligand>
</feature>
<feature type="binding site" evidence="1">
    <location>
        <position position="98"/>
    </location>
    <ligand>
        <name>ATP</name>
        <dbReference type="ChEBI" id="CHEBI:30616"/>
    </ligand>
</feature>
<feature type="binding site" evidence="1">
    <location>
        <position position="121"/>
    </location>
    <ligand>
        <name>ATP</name>
        <dbReference type="ChEBI" id="CHEBI:30616"/>
    </ligand>
</feature>
<feature type="binding site" evidence="1">
    <location>
        <position position="144"/>
    </location>
    <ligand>
        <name>ATP</name>
        <dbReference type="ChEBI" id="CHEBI:30616"/>
    </ligand>
</feature>
<feature type="binding site" evidence="1">
    <location>
        <position position="178"/>
    </location>
    <ligand>
        <name>ATP</name>
        <dbReference type="ChEBI" id="CHEBI:30616"/>
    </ligand>
</feature>
<feature type="binding site" evidence="1">
    <location>
        <position position="220"/>
    </location>
    <ligand>
        <name>Zn(2+)</name>
        <dbReference type="ChEBI" id="CHEBI:29105"/>
    </ligand>
</feature>
<feature type="binding site" evidence="1">
    <location>
        <position position="223"/>
    </location>
    <ligand>
        <name>Zn(2+)</name>
        <dbReference type="ChEBI" id="CHEBI:29105"/>
    </ligand>
</feature>
<feature type="binding site" evidence="1">
    <location>
        <position position="297"/>
    </location>
    <ligand>
        <name>Zn(2+)</name>
        <dbReference type="ChEBI" id="CHEBI:29105"/>
    </ligand>
</feature>
<feature type="binding site" evidence="1">
    <location>
        <position position="302"/>
    </location>
    <ligand>
        <name>Zn(2+)</name>
        <dbReference type="ChEBI" id="CHEBI:29105"/>
    </ligand>
</feature>
<gene>
    <name type="ORF">CPIJ009416</name>
</gene>
<comment type="function">
    <text evidence="1">E1-like enzyme which activates UFM1.</text>
</comment>
<comment type="similarity">
    <text evidence="2">Belongs to the ubiquitin-activating E1 family. UBA5 subfamily.</text>
</comment>
<organism>
    <name type="scientific">Culex quinquefasciatus</name>
    <name type="common">Southern house mosquito</name>
    <name type="synonym">Culex pungens</name>
    <dbReference type="NCBI Taxonomy" id="7176"/>
    <lineage>
        <taxon>Eukaryota</taxon>
        <taxon>Metazoa</taxon>
        <taxon>Ecdysozoa</taxon>
        <taxon>Arthropoda</taxon>
        <taxon>Hexapoda</taxon>
        <taxon>Insecta</taxon>
        <taxon>Pterygota</taxon>
        <taxon>Neoptera</taxon>
        <taxon>Endopterygota</taxon>
        <taxon>Diptera</taxon>
        <taxon>Nematocera</taxon>
        <taxon>Culicoidea</taxon>
        <taxon>Culicidae</taxon>
        <taxon>Culicinae</taxon>
        <taxon>Culicini</taxon>
        <taxon>Culex</taxon>
        <taxon>Culex</taxon>
    </lineage>
</organism>
<sequence>MTSVAELREQVRSLQDELAQLKGERGKTTTREKITKMSSEVVDSNPYSRLMALQRMGIVKEYEQIRQKSVAVVGVGGVGSVTADMLTRCGVGKLILFDYDKVELANMNRLFFTPDQAGLSKVEAAAKTLNYINPDVKIFTNNYNITTVESFEKFMNAIRTGGIDGSGAVDLVLSCVDNFEARMAINAACNELSLNWFESGVSENAVSGHIQFIQPGEKACFACAPPLVVAENIDEKTLKREGVCAASLPTTMGIVAGMLVQNTLKYLLKFGTVSDYLGYNALIDFFPKMGLKPNPTCDDRFCVLRQQEFAAKPKEETFEEVQQEEESPVHAENLYGIELVSETEVESAPTVPVATANTGLKLAFETPIQMEHSSAATDVIKNDDVSLDDLMAQMKAI</sequence>
<dbReference type="EMBL" id="DS232046">
    <property type="protein sequence ID" value="EDS33031.1"/>
    <property type="molecule type" value="Genomic_DNA"/>
</dbReference>
<dbReference type="RefSeq" id="XP_001851085.1">
    <property type="nucleotide sequence ID" value="XM_001851033.1"/>
</dbReference>
<dbReference type="SMR" id="B0WQV1"/>
<dbReference type="FunCoup" id="B0WQV1">
    <property type="interactions" value="2415"/>
</dbReference>
<dbReference type="STRING" id="7176.B0WQV1"/>
<dbReference type="EnsemblMetazoa" id="CPIJ009416-RA">
    <property type="protein sequence ID" value="CPIJ009416-PA"/>
    <property type="gene ID" value="CPIJ009416"/>
</dbReference>
<dbReference type="KEGG" id="cqu:CpipJ_CPIJ009416"/>
<dbReference type="VEuPathDB" id="VectorBase:CPIJ009416"/>
<dbReference type="eggNOG" id="KOG2336">
    <property type="taxonomic scope" value="Eukaryota"/>
</dbReference>
<dbReference type="HOGENOM" id="CLU_013325_0_1_1"/>
<dbReference type="InParanoid" id="B0WQV1"/>
<dbReference type="OMA" id="MNIVKDY"/>
<dbReference type="PhylomeDB" id="B0WQV1"/>
<dbReference type="Proteomes" id="UP000002320">
    <property type="component" value="Unassembled WGS sequence"/>
</dbReference>
<dbReference type="GO" id="GO:0005829">
    <property type="term" value="C:cytosol"/>
    <property type="evidence" value="ECO:0007669"/>
    <property type="project" value="TreeGrafter"/>
</dbReference>
<dbReference type="GO" id="GO:0005524">
    <property type="term" value="F:ATP binding"/>
    <property type="evidence" value="ECO:0007669"/>
    <property type="project" value="UniProtKB-KW"/>
</dbReference>
<dbReference type="GO" id="GO:0046872">
    <property type="term" value="F:metal ion binding"/>
    <property type="evidence" value="ECO:0007669"/>
    <property type="project" value="UniProtKB-KW"/>
</dbReference>
<dbReference type="GO" id="GO:0071566">
    <property type="term" value="F:UFM1 activating enzyme activity"/>
    <property type="evidence" value="ECO:0007669"/>
    <property type="project" value="TreeGrafter"/>
</dbReference>
<dbReference type="GO" id="GO:0071569">
    <property type="term" value="P:protein ufmylation"/>
    <property type="evidence" value="ECO:0007669"/>
    <property type="project" value="TreeGrafter"/>
</dbReference>
<dbReference type="CDD" id="cd00757">
    <property type="entry name" value="ThiF_MoeB_HesA_family"/>
    <property type="match status" value="1"/>
</dbReference>
<dbReference type="FunFam" id="3.40.50.720:FF:000066">
    <property type="entry name" value="Putative ubiquitin-like modifier-activating enzyme 5"/>
    <property type="match status" value="1"/>
</dbReference>
<dbReference type="Gene3D" id="3.40.50.720">
    <property type="entry name" value="NAD(P)-binding Rossmann-like Domain"/>
    <property type="match status" value="1"/>
</dbReference>
<dbReference type="InterPro" id="IPR029752">
    <property type="entry name" value="D-isomer_DH_CS1"/>
</dbReference>
<dbReference type="InterPro" id="IPR045886">
    <property type="entry name" value="ThiF/MoeB/HesA"/>
</dbReference>
<dbReference type="InterPro" id="IPR000594">
    <property type="entry name" value="ThiF_NAD_FAD-bd"/>
</dbReference>
<dbReference type="InterPro" id="IPR035985">
    <property type="entry name" value="Ubiquitin-activating_enz"/>
</dbReference>
<dbReference type="PANTHER" id="PTHR10953">
    <property type="entry name" value="UBIQUITIN-ACTIVATING ENZYME E1"/>
    <property type="match status" value="1"/>
</dbReference>
<dbReference type="PANTHER" id="PTHR10953:SF9">
    <property type="entry name" value="UBIQUITIN-LIKE MODIFIER-ACTIVATING ENZYME 5"/>
    <property type="match status" value="1"/>
</dbReference>
<dbReference type="Pfam" id="PF00899">
    <property type="entry name" value="ThiF"/>
    <property type="match status" value="1"/>
</dbReference>
<dbReference type="SUPFAM" id="SSF69572">
    <property type="entry name" value="Activating enzymes of the ubiquitin-like proteins"/>
    <property type="match status" value="1"/>
</dbReference>
<protein>
    <recommendedName>
        <fullName>Ubiquitin-like modifier-activating enzyme 5</fullName>
        <shortName>Ubiquitin-activating enzyme 5</shortName>
    </recommendedName>
</protein>
<reference key="1">
    <citation type="submission" date="2007-03" db="EMBL/GenBank/DDBJ databases">
        <title>Annotation of Culex pipiens quinquefasciatus.</title>
        <authorList>
            <consortium name="The Broad Institute Genome Sequencing Platform"/>
            <person name="Atkinson P.W."/>
            <person name="Hemingway J."/>
            <person name="Christensen B.M."/>
            <person name="Higgs S."/>
            <person name="Kodira C.D."/>
            <person name="Hannick L.I."/>
            <person name="Megy K."/>
            <person name="O'Leary S.B."/>
            <person name="Pearson M."/>
            <person name="Haas B.J."/>
            <person name="Mauceli E."/>
            <person name="Wortman J.R."/>
            <person name="Lee N.H."/>
            <person name="Guigo R."/>
            <person name="Stanke M."/>
            <person name="Alvarado L."/>
            <person name="Amedeo P."/>
            <person name="Antoine C.H."/>
            <person name="Arensburger P."/>
            <person name="Bidwell S.L."/>
            <person name="Crawford M."/>
            <person name="Camaro F."/>
            <person name="Devon K."/>
            <person name="Engels R."/>
            <person name="Hammond M."/>
            <person name="Howarth C."/>
            <person name="Koehrsen M."/>
            <person name="Lawson D."/>
            <person name="Montgomery P."/>
            <person name="Nene V."/>
            <person name="Nusbaum C."/>
            <person name="Puiu D."/>
            <person name="Romero-Severson J."/>
            <person name="Severson D.W."/>
            <person name="Shumway M."/>
            <person name="Sisk P."/>
            <person name="Stolte C."/>
            <person name="Zeng Q."/>
            <person name="Eisenstadt E."/>
            <person name="Fraser-Liggett C.M."/>
            <person name="Strausberg R."/>
            <person name="Galagan J."/>
            <person name="Birren B."/>
            <person name="Collins F.H."/>
        </authorList>
    </citation>
    <scope>NUCLEOTIDE SEQUENCE [LARGE SCALE GENOMIC DNA]</scope>
    <source>
        <strain>JHB</strain>
    </source>
</reference>